<name>TRUA_CLOK5</name>
<organism>
    <name type="scientific">Clostridium kluyveri (strain ATCC 8527 / DSM 555 / NBRC 12016 / NCIMB 10680 / K1)</name>
    <dbReference type="NCBI Taxonomy" id="431943"/>
    <lineage>
        <taxon>Bacteria</taxon>
        <taxon>Bacillati</taxon>
        <taxon>Bacillota</taxon>
        <taxon>Clostridia</taxon>
        <taxon>Eubacteriales</taxon>
        <taxon>Clostridiaceae</taxon>
        <taxon>Clostridium</taxon>
    </lineage>
</organism>
<protein>
    <recommendedName>
        <fullName evidence="1">tRNA pseudouridine synthase A</fullName>
        <ecNumber evidence="1">5.4.99.12</ecNumber>
    </recommendedName>
    <alternativeName>
        <fullName evidence="1">tRNA pseudouridine(38-40) synthase</fullName>
    </alternativeName>
    <alternativeName>
        <fullName evidence="1">tRNA pseudouridylate synthase I</fullName>
    </alternativeName>
    <alternativeName>
        <fullName evidence="1">tRNA-uridine isomerase I</fullName>
    </alternativeName>
</protein>
<feature type="chain" id="PRO_1000077087" description="tRNA pseudouridine synthase A">
    <location>
        <begin position="1"/>
        <end position="244"/>
    </location>
</feature>
<feature type="active site" description="Nucleophile" evidence="1">
    <location>
        <position position="52"/>
    </location>
</feature>
<feature type="binding site" evidence="1">
    <location>
        <position position="110"/>
    </location>
    <ligand>
        <name>substrate</name>
    </ligand>
</feature>
<proteinExistence type="inferred from homology"/>
<accession>A5N4T0</accession>
<evidence type="ECO:0000255" key="1">
    <source>
        <dbReference type="HAMAP-Rule" id="MF_00171"/>
    </source>
</evidence>
<sequence>MKNIKLVIEYDGTNYSGWQRQYNAITIQQRLEEAIEKATGEFSPVIGSSRTDAGVHARGFVCNFFTASKIPTSNIKMVLNTLLPEDIAVLDSKEVDSSFHSRYFTTGKEYSYTIVTGDRPPVIGRQYVYYFRRKLDIEKIKNSCEYFIGTHDFSAFKKKGSTARSSIRTIKELTVLKEKNIIKFNIVGDGFLYNMVRIIIGTLLEVGLGRFSIEYVKYILESKDRAKAGKPVPAKGLCLEKVFY</sequence>
<reference key="1">
    <citation type="journal article" date="2008" name="Proc. Natl. Acad. Sci. U.S.A.">
        <title>The genome of Clostridium kluyveri, a strict anaerobe with unique metabolic features.</title>
        <authorList>
            <person name="Seedorf H."/>
            <person name="Fricke W.F."/>
            <person name="Veith B."/>
            <person name="Brueggemann H."/>
            <person name="Liesegang H."/>
            <person name="Strittmatter A."/>
            <person name="Miethke M."/>
            <person name="Buckel W."/>
            <person name="Hinderberger J."/>
            <person name="Li F."/>
            <person name="Hagemeier C."/>
            <person name="Thauer R.K."/>
            <person name="Gottschalk G."/>
        </authorList>
    </citation>
    <scope>NUCLEOTIDE SEQUENCE [LARGE SCALE GENOMIC DNA]</scope>
    <source>
        <strain>ATCC 8527 / DSM 555 / NBRC 12016 / NCIMB 10680 / K1</strain>
    </source>
</reference>
<comment type="function">
    <text evidence="1">Formation of pseudouridine at positions 38, 39 and 40 in the anticodon stem and loop of transfer RNAs.</text>
</comment>
<comment type="catalytic activity">
    <reaction evidence="1">
        <text>uridine(38/39/40) in tRNA = pseudouridine(38/39/40) in tRNA</text>
        <dbReference type="Rhea" id="RHEA:22376"/>
        <dbReference type="Rhea" id="RHEA-COMP:10085"/>
        <dbReference type="Rhea" id="RHEA-COMP:10087"/>
        <dbReference type="ChEBI" id="CHEBI:65314"/>
        <dbReference type="ChEBI" id="CHEBI:65315"/>
        <dbReference type="EC" id="5.4.99.12"/>
    </reaction>
</comment>
<comment type="subunit">
    <text evidence="1">Homodimer.</text>
</comment>
<comment type="similarity">
    <text evidence="1">Belongs to the tRNA pseudouridine synthase TruA family.</text>
</comment>
<gene>
    <name evidence="1" type="primary">truA</name>
    <name type="ordered locus">CKL_0257</name>
</gene>
<dbReference type="EC" id="5.4.99.12" evidence="1"/>
<dbReference type="EMBL" id="CP000673">
    <property type="protein sequence ID" value="EDK32311.1"/>
    <property type="molecule type" value="Genomic_DNA"/>
</dbReference>
<dbReference type="RefSeq" id="WP_011988836.1">
    <property type="nucleotide sequence ID" value="NC_009706.1"/>
</dbReference>
<dbReference type="SMR" id="A5N4T0"/>
<dbReference type="STRING" id="431943.CKL_0257"/>
<dbReference type="KEGG" id="ckl:CKL_0257"/>
<dbReference type="eggNOG" id="COG0101">
    <property type="taxonomic scope" value="Bacteria"/>
</dbReference>
<dbReference type="HOGENOM" id="CLU_014673_0_1_9"/>
<dbReference type="Proteomes" id="UP000002411">
    <property type="component" value="Chromosome"/>
</dbReference>
<dbReference type="GO" id="GO:0003723">
    <property type="term" value="F:RNA binding"/>
    <property type="evidence" value="ECO:0007669"/>
    <property type="project" value="InterPro"/>
</dbReference>
<dbReference type="GO" id="GO:0160147">
    <property type="term" value="F:tRNA pseudouridine(38-40) synthase activity"/>
    <property type="evidence" value="ECO:0007669"/>
    <property type="project" value="UniProtKB-EC"/>
</dbReference>
<dbReference type="GO" id="GO:0031119">
    <property type="term" value="P:tRNA pseudouridine synthesis"/>
    <property type="evidence" value="ECO:0007669"/>
    <property type="project" value="UniProtKB-UniRule"/>
</dbReference>
<dbReference type="CDD" id="cd02570">
    <property type="entry name" value="PseudoU_synth_EcTruA"/>
    <property type="match status" value="1"/>
</dbReference>
<dbReference type="FunFam" id="3.30.70.580:FF:000001">
    <property type="entry name" value="tRNA pseudouridine synthase A"/>
    <property type="match status" value="1"/>
</dbReference>
<dbReference type="Gene3D" id="3.30.70.660">
    <property type="entry name" value="Pseudouridine synthase I, catalytic domain, C-terminal subdomain"/>
    <property type="match status" value="1"/>
</dbReference>
<dbReference type="Gene3D" id="3.30.70.580">
    <property type="entry name" value="Pseudouridine synthase I, catalytic domain, N-terminal subdomain"/>
    <property type="match status" value="1"/>
</dbReference>
<dbReference type="HAMAP" id="MF_00171">
    <property type="entry name" value="TruA"/>
    <property type="match status" value="1"/>
</dbReference>
<dbReference type="InterPro" id="IPR020103">
    <property type="entry name" value="PsdUridine_synth_cat_dom_sf"/>
</dbReference>
<dbReference type="InterPro" id="IPR001406">
    <property type="entry name" value="PsdUridine_synth_TruA"/>
</dbReference>
<dbReference type="InterPro" id="IPR020097">
    <property type="entry name" value="PsdUridine_synth_TruA_a/b_dom"/>
</dbReference>
<dbReference type="InterPro" id="IPR020095">
    <property type="entry name" value="PsdUridine_synth_TruA_C"/>
</dbReference>
<dbReference type="InterPro" id="IPR020094">
    <property type="entry name" value="TruA/RsuA/RluB/E/F_N"/>
</dbReference>
<dbReference type="NCBIfam" id="TIGR00071">
    <property type="entry name" value="hisT_truA"/>
    <property type="match status" value="1"/>
</dbReference>
<dbReference type="PANTHER" id="PTHR11142">
    <property type="entry name" value="PSEUDOURIDYLATE SYNTHASE"/>
    <property type="match status" value="1"/>
</dbReference>
<dbReference type="PANTHER" id="PTHR11142:SF0">
    <property type="entry name" value="TRNA PSEUDOURIDINE SYNTHASE-LIKE 1"/>
    <property type="match status" value="1"/>
</dbReference>
<dbReference type="Pfam" id="PF01416">
    <property type="entry name" value="PseudoU_synth_1"/>
    <property type="match status" value="2"/>
</dbReference>
<dbReference type="PIRSF" id="PIRSF001430">
    <property type="entry name" value="tRNA_psdUrid_synth"/>
    <property type="match status" value="1"/>
</dbReference>
<dbReference type="SUPFAM" id="SSF55120">
    <property type="entry name" value="Pseudouridine synthase"/>
    <property type="match status" value="1"/>
</dbReference>
<keyword id="KW-0413">Isomerase</keyword>
<keyword id="KW-1185">Reference proteome</keyword>
<keyword id="KW-0819">tRNA processing</keyword>